<proteinExistence type="inferred from homology"/>
<gene>
    <name type="ordered locus">BPUM_0734</name>
</gene>
<name>Y734_BACP2</name>
<comment type="similarity">
    <text evidence="1">Belongs to the UPF0435 family.</text>
</comment>
<accession>A8FB03</accession>
<sequence length="71" mass="8146">MSEQKAAEVNQLIEDISQKLNMLNIGVIKAEDFSPDKYEDIEFLHQMVMKKSSFSPSEMQAIASELKNLRK</sequence>
<feature type="chain" id="PRO_1000062719" description="UPF0435 protein BPUM_0734">
    <location>
        <begin position="1"/>
        <end position="71"/>
    </location>
</feature>
<evidence type="ECO:0000255" key="1">
    <source>
        <dbReference type="HAMAP-Rule" id="MF_00829"/>
    </source>
</evidence>
<organism>
    <name type="scientific">Bacillus pumilus (strain SAFR-032)</name>
    <dbReference type="NCBI Taxonomy" id="315750"/>
    <lineage>
        <taxon>Bacteria</taxon>
        <taxon>Bacillati</taxon>
        <taxon>Bacillota</taxon>
        <taxon>Bacilli</taxon>
        <taxon>Bacillales</taxon>
        <taxon>Bacillaceae</taxon>
        <taxon>Bacillus</taxon>
    </lineage>
</organism>
<reference key="1">
    <citation type="journal article" date="2007" name="PLoS ONE">
        <title>Paradoxical DNA repair and peroxide resistance gene conservation in Bacillus pumilus SAFR-032.</title>
        <authorList>
            <person name="Gioia J."/>
            <person name="Yerrapragada S."/>
            <person name="Qin X."/>
            <person name="Jiang H."/>
            <person name="Igboeli O.C."/>
            <person name="Muzny D."/>
            <person name="Dugan-Rocha S."/>
            <person name="Ding Y."/>
            <person name="Hawes A."/>
            <person name="Liu W."/>
            <person name="Perez L."/>
            <person name="Kovar C."/>
            <person name="Dinh H."/>
            <person name="Lee S."/>
            <person name="Nazareth L."/>
            <person name="Blyth P."/>
            <person name="Holder M."/>
            <person name="Buhay C."/>
            <person name="Tirumalai M.R."/>
            <person name="Liu Y."/>
            <person name="Dasgupta I."/>
            <person name="Bokhetache L."/>
            <person name="Fujita M."/>
            <person name="Karouia F."/>
            <person name="Eswara Moorthy P."/>
            <person name="Siefert J."/>
            <person name="Uzman A."/>
            <person name="Buzumbo P."/>
            <person name="Verma A."/>
            <person name="Zwiya H."/>
            <person name="McWilliams B.D."/>
            <person name="Olowu A."/>
            <person name="Clinkenbeard K.D."/>
            <person name="Newcombe D."/>
            <person name="Golebiewski L."/>
            <person name="Petrosino J.F."/>
            <person name="Nicholson W.L."/>
            <person name="Fox G.E."/>
            <person name="Venkateswaran K."/>
            <person name="Highlander S.K."/>
            <person name="Weinstock G.M."/>
        </authorList>
    </citation>
    <scope>NUCLEOTIDE SEQUENCE [LARGE SCALE GENOMIC DNA]</scope>
    <source>
        <strain>SAFR-032</strain>
    </source>
</reference>
<protein>
    <recommendedName>
        <fullName evidence="1">UPF0435 protein BPUM_0734</fullName>
    </recommendedName>
</protein>
<dbReference type="EMBL" id="CP000813">
    <property type="protein sequence ID" value="ABV61420.1"/>
    <property type="molecule type" value="Genomic_DNA"/>
</dbReference>
<dbReference type="RefSeq" id="WP_003214000.1">
    <property type="nucleotide sequence ID" value="NZ_VEIS01000001.1"/>
</dbReference>
<dbReference type="SMR" id="A8FB03"/>
<dbReference type="STRING" id="315750.BPUM_0734"/>
<dbReference type="KEGG" id="bpu:BPUM_0734"/>
<dbReference type="eggNOG" id="COG4840">
    <property type="taxonomic scope" value="Bacteria"/>
</dbReference>
<dbReference type="HOGENOM" id="CLU_199533_1_0_9"/>
<dbReference type="OrthoDB" id="2361695at2"/>
<dbReference type="Proteomes" id="UP000001355">
    <property type="component" value="Chromosome"/>
</dbReference>
<dbReference type="HAMAP" id="MF_00829">
    <property type="entry name" value="UPF0435"/>
    <property type="match status" value="1"/>
</dbReference>
<dbReference type="InterPro" id="IPR009507">
    <property type="entry name" value="UPF0435"/>
</dbReference>
<dbReference type="Pfam" id="PF06569">
    <property type="entry name" value="DUF1128"/>
    <property type="match status" value="1"/>
</dbReference>